<evidence type="ECO:0000255" key="1">
    <source>
        <dbReference type="HAMAP-Rule" id="MF_00568"/>
    </source>
</evidence>
<name>NADA_THEVB</name>
<accession>Q8DM90</accession>
<feature type="chain" id="PRO_1000129445" description="Quinolinate synthase">
    <location>
        <begin position="1"/>
        <end position="319"/>
    </location>
</feature>
<feature type="binding site" evidence="1">
    <location>
        <position position="34"/>
    </location>
    <ligand>
        <name>iminosuccinate</name>
        <dbReference type="ChEBI" id="CHEBI:77875"/>
    </ligand>
</feature>
<feature type="binding site" evidence="1">
    <location>
        <position position="51"/>
    </location>
    <ligand>
        <name>iminosuccinate</name>
        <dbReference type="ChEBI" id="CHEBI:77875"/>
    </ligand>
</feature>
<feature type="binding site" evidence="1">
    <location>
        <position position="96"/>
    </location>
    <ligand>
        <name>[4Fe-4S] cluster</name>
        <dbReference type="ChEBI" id="CHEBI:49883"/>
    </ligand>
</feature>
<feature type="binding site" evidence="1">
    <location>
        <begin position="122"/>
        <end position="124"/>
    </location>
    <ligand>
        <name>iminosuccinate</name>
        <dbReference type="ChEBI" id="CHEBI:77875"/>
    </ligand>
</feature>
<feature type="binding site" evidence="1">
    <location>
        <position position="139"/>
    </location>
    <ligand>
        <name>iminosuccinate</name>
        <dbReference type="ChEBI" id="CHEBI:77875"/>
    </ligand>
</feature>
<feature type="binding site" evidence="1">
    <location>
        <position position="182"/>
    </location>
    <ligand>
        <name>[4Fe-4S] cluster</name>
        <dbReference type="ChEBI" id="CHEBI:49883"/>
    </ligand>
</feature>
<feature type="binding site" evidence="1">
    <location>
        <begin position="208"/>
        <end position="210"/>
    </location>
    <ligand>
        <name>iminosuccinate</name>
        <dbReference type="ChEBI" id="CHEBI:77875"/>
    </ligand>
</feature>
<feature type="binding site" evidence="1">
    <location>
        <position position="225"/>
    </location>
    <ligand>
        <name>iminosuccinate</name>
        <dbReference type="ChEBI" id="CHEBI:77875"/>
    </ligand>
</feature>
<feature type="binding site" evidence="1">
    <location>
        <position position="276"/>
    </location>
    <ligand>
        <name>[4Fe-4S] cluster</name>
        <dbReference type="ChEBI" id="CHEBI:49883"/>
    </ligand>
</feature>
<sequence>MFATLAAPQPPLPLDLVAAIQDLKRELNAVILAHYYQDPAIQDVADYIGDSLGLSRQAASTNADVIVFAGVHFMAETAKILNPDKLVLLPDLAAGCSLADSCPADAFAAFKAQYPDHWVISYINCSAEIKALSDIICTSSNAVKIVQQLPPDQPLIFAPDRNLGRYVMAQTGRQMVLWEGSCIVHETFSERRILELKATYPNAQVIAHPECEEAVLRHANFIGSTTALLNYSQTEDCDTFIVVTEPGILHQMQRRNPQKTFIPAPPQDQTCNCNECPFMRLNTLEKLYLCMRDRKPQIELPEDLRLAALKPIQRMLEMS</sequence>
<reference key="1">
    <citation type="journal article" date="2002" name="DNA Res.">
        <title>Complete genome structure of the thermophilic cyanobacterium Thermosynechococcus elongatus BP-1.</title>
        <authorList>
            <person name="Nakamura Y."/>
            <person name="Kaneko T."/>
            <person name="Sato S."/>
            <person name="Ikeuchi M."/>
            <person name="Katoh H."/>
            <person name="Sasamoto S."/>
            <person name="Watanabe A."/>
            <person name="Iriguchi M."/>
            <person name="Kawashima K."/>
            <person name="Kimura T."/>
            <person name="Kishida Y."/>
            <person name="Kiyokawa C."/>
            <person name="Kohara M."/>
            <person name="Matsumoto M."/>
            <person name="Matsuno A."/>
            <person name="Nakazaki N."/>
            <person name="Shimpo S."/>
            <person name="Sugimoto M."/>
            <person name="Takeuchi C."/>
            <person name="Yamada M."/>
            <person name="Tabata S."/>
        </authorList>
    </citation>
    <scope>NUCLEOTIDE SEQUENCE [LARGE SCALE GENOMIC DNA]</scope>
    <source>
        <strain>NIES-2133 / IAM M-273 / BP-1</strain>
    </source>
</reference>
<gene>
    <name evidence="1" type="primary">nadA</name>
    <name type="ordered locus">tll0231</name>
</gene>
<organism>
    <name type="scientific">Thermosynechococcus vestitus (strain NIES-2133 / IAM M-273 / BP-1)</name>
    <dbReference type="NCBI Taxonomy" id="197221"/>
    <lineage>
        <taxon>Bacteria</taxon>
        <taxon>Bacillati</taxon>
        <taxon>Cyanobacteriota</taxon>
        <taxon>Cyanophyceae</taxon>
        <taxon>Acaryochloridales</taxon>
        <taxon>Thermosynechococcaceae</taxon>
        <taxon>Thermosynechococcus</taxon>
    </lineage>
</organism>
<keyword id="KW-0004">4Fe-4S</keyword>
<keyword id="KW-0963">Cytoplasm</keyword>
<keyword id="KW-0408">Iron</keyword>
<keyword id="KW-0411">Iron-sulfur</keyword>
<keyword id="KW-0479">Metal-binding</keyword>
<keyword id="KW-0662">Pyridine nucleotide biosynthesis</keyword>
<keyword id="KW-1185">Reference proteome</keyword>
<keyword id="KW-0808">Transferase</keyword>
<proteinExistence type="inferred from homology"/>
<protein>
    <recommendedName>
        <fullName evidence="1">Quinolinate synthase</fullName>
        <ecNumber evidence="1">2.5.1.72</ecNumber>
    </recommendedName>
</protein>
<comment type="function">
    <text evidence="1">Catalyzes the condensation of iminoaspartate with dihydroxyacetone phosphate to form quinolinate.</text>
</comment>
<comment type="catalytic activity">
    <reaction evidence="1">
        <text>iminosuccinate + dihydroxyacetone phosphate = quinolinate + phosphate + 2 H2O + H(+)</text>
        <dbReference type="Rhea" id="RHEA:25888"/>
        <dbReference type="ChEBI" id="CHEBI:15377"/>
        <dbReference type="ChEBI" id="CHEBI:15378"/>
        <dbReference type="ChEBI" id="CHEBI:29959"/>
        <dbReference type="ChEBI" id="CHEBI:43474"/>
        <dbReference type="ChEBI" id="CHEBI:57642"/>
        <dbReference type="ChEBI" id="CHEBI:77875"/>
        <dbReference type="EC" id="2.5.1.72"/>
    </reaction>
    <physiologicalReaction direction="left-to-right" evidence="1">
        <dbReference type="Rhea" id="RHEA:25889"/>
    </physiologicalReaction>
</comment>
<comment type="cofactor">
    <cofactor evidence="1">
        <name>[4Fe-4S] cluster</name>
        <dbReference type="ChEBI" id="CHEBI:49883"/>
    </cofactor>
    <text evidence="1">Binds 1 [4Fe-4S] cluster per subunit.</text>
</comment>
<comment type="pathway">
    <text evidence="1">Cofactor biosynthesis; NAD(+) biosynthesis; quinolinate from iminoaspartate: step 1/1.</text>
</comment>
<comment type="subcellular location">
    <subcellularLocation>
        <location evidence="1">Cytoplasm</location>
    </subcellularLocation>
</comment>
<comment type="similarity">
    <text evidence="1">Belongs to the quinolinate synthase family. Type 2 subfamily.</text>
</comment>
<dbReference type="EC" id="2.5.1.72" evidence="1"/>
<dbReference type="EMBL" id="BA000039">
    <property type="protein sequence ID" value="BAC07784.1"/>
    <property type="molecule type" value="Genomic_DNA"/>
</dbReference>
<dbReference type="RefSeq" id="NP_681022.1">
    <property type="nucleotide sequence ID" value="NC_004113.1"/>
</dbReference>
<dbReference type="RefSeq" id="WP_011056086.1">
    <property type="nucleotide sequence ID" value="NC_004113.1"/>
</dbReference>
<dbReference type="SMR" id="Q8DM90"/>
<dbReference type="STRING" id="197221.gene:10746813"/>
<dbReference type="EnsemblBacteria" id="BAC07784">
    <property type="protein sequence ID" value="BAC07784"/>
    <property type="gene ID" value="BAC07784"/>
</dbReference>
<dbReference type="KEGG" id="tel:tll0231"/>
<dbReference type="PATRIC" id="fig|197221.4.peg.236"/>
<dbReference type="eggNOG" id="COG0379">
    <property type="taxonomic scope" value="Bacteria"/>
</dbReference>
<dbReference type="UniPathway" id="UPA00253">
    <property type="reaction ID" value="UER00327"/>
</dbReference>
<dbReference type="Proteomes" id="UP000000440">
    <property type="component" value="Chromosome"/>
</dbReference>
<dbReference type="GO" id="GO:0005829">
    <property type="term" value="C:cytosol"/>
    <property type="evidence" value="ECO:0007669"/>
    <property type="project" value="TreeGrafter"/>
</dbReference>
<dbReference type="GO" id="GO:0051539">
    <property type="term" value="F:4 iron, 4 sulfur cluster binding"/>
    <property type="evidence" value="ECO:0007669"/>
    <property type="project" value="UniProtKB-KW"/>
</dbReference>
<dbReference type="GO" id="GO:0046872">
    <property type="term" value="F:metal ion binding"/>
    <property type="evidence" value="ECO:0007669"/>
    <property type="project" value="UniProtKB-KW"/>
</dbReference>
<dbReference type="GO" id="GO:0008987">
    <property type="term" value="F:quinolinate synthetase A activity"/>
    <property type="evidence" value="ECO:0007669"/>
    <property type="project" value="UniProtKB-UniRule"/>
</dbReference>
<dbReference type="GO" id="GO:0034628">
    <property type="term" value="P:'de novo' NAD biosynthetic process from L-aspartate"/>
    <property type="evidence" value="ECO:0007669"/>
    <property type="project" value="TreeGrafter"/>
</dbReference>
<dbReference type="FunFam" id="3.40.50.10800:FF:000001">
    <property type="entry name" value="Quinolinate synthase A"/>
    <property type="match status" value="1"/>
</dbReference>
<dbReference type="FunFam" id="3.40.50.10800:FF:000003">
    <property type="entry name" value="Quinolinate synthase A"/>
    <property type="match status" value="1"/>
</dbReference>
<dbReference type="Gene3D" id="3.40.50.10800">
    <property type="entry name" value="NadA-like"/>
    <property type="match status" value="3"/>
</dbReference>
<dbReference type="HAMAP" id="MF_00568">
    <property type="entry name" value="NadA_type2"/>
    <property type="match status" value="1"/>
</dbReference>
<dbReference type="InterPro" id="IPR003473">
    <property type="entry name" value="NadA"/>
</dbReference>
<dbReference type="InterPro" id="IPR036094">
    <property type="entry name" value="NadA_sf"/>
</dbReference>
<dbReference type="InterPro" id="IPR023066">
    <property type="entry name" value="Quinolinate_synth_type2"/>
</dbReference>
<dbReference type="NCBIfam" id="TIGR00550">
    <property type="entry name" value="nadA"/>
    <property type="match status" value="1"/>
</dbReference>
<dbReference type="NCBIfam" id="NF006878">
    <property type="entry name" value="PRK09375.1-2"/>
    <property type="match status" value="1"/>
</dbReference>
<dbReference type="PANTHER" id="PTHR30573:SF0">
    <property type="entry name" value="QUINOLINATE SYNTHASE, CHLOROPLASTIC"/>
    <property type="match status" value="1"/>
</dbReference>
<dbReference type="PANTHER" id="PTHR30573">
    <property type="entry name" value="QUINOLINATE SYNTHETASE A"/>
    <property type="match status" value="1"/>
</dbReference>
<dbReference type="Pfam" id="PF02445">
    <property type="entry name" value="NadA"/>
    <property type="match status" value="1"/>
</dbReference>
<dbReference type="SUPFAM" id="SSF142754">
    <property type="entry name" value="NadA-like"/>
    <property type="match status" value="1"/>
</dbReference>